<name>THIO_ECHGR</name>
<comment type="function">
    <text>Participates in various redox reactions through the reversible oxidation of its active center dithiol to a disulfide and catalyzes dithiol-disulfide exchange reactions.</text>
</comment>
<comment type="similarity">
    <text evidence="3">Belongs to the thioredoxin family.</text>
</comment>
<protein>
    <recommendedName>
        <fullName>Thioredoxin</fullName>
        <shortName>Trx</shortName>
    </recommendedName>
</protein>
<feature type="chain" id="PRO_0000120037" description="Thioredoxin">
    <location>
        <begin position="1"/>
        <end position="107"/>
    </location>
</feature>
<feature type="domain" description="Thioredoxin" evidence="2">
    <location>
        <begin position="2"/>
        <end position="107"/>
    </location>
</feature>
<feature type="active site" description="Nucleophile" evidence="1">
    <location>
        <position position="34"/>
    </location>
</feature>
<feature type="active site" description="Nucleophile" evidence="1">
    <location>
        <position position="37"/>
    </location>
</feature>
<feature type="site" description="Deprotonates C-terminal active site Cys" evidence="1">
    <location>
        <position position="28"/>
    </location>
</feature>
<feature type="site" description="Contributes to redox potential value" evidence="1">
    <location>
        <position position="35"/>
    </location>
</feature>
<feature type="site" description="Contributes to redox potential value" evidence="1">
    <location>
        <position position="36"/>
    </location>
</feature>
<feature type="disulfide bond" description="Redox-active" evidence="2">
    <location>
        <begin position="34"/>
        <end position="37"/>
    </location>
</feature>
<reference key="1">
    <citation type="journal article" date="1999" name="Biochem. Biophys. Res. Commun.">
        <title>Molecular cloning and characterization of a thioredoxin gene from Echinococcus granulosus.</title>
        <authorList>
            <person name="Chalar C."/>
            <person name="Martinez C."/>
            <person name="Agorio A."/>
            <person name="Salinas G."/>
            <person name="Soto J."/>
            <person name="Ehrlich R."/>
        </authorList>
    </citation>
    <scope>NUCLEOTIDE SEQUENCE [MRNA]</scope>
</reference>
<dbReference type="EMBL" id="AF034637">
    <property type="protein sequence ID" value="AAC14584.1"/>
    <property type="molecule type" value="mRNA"/>
</dbReference>
<dbReference type="SMR" id="O17486"/>
<dbReference type="OrthoDB" id="2121326at2759"/>
<dbReference type="Proteomes" id="UP000492820">
    <property type="component" value="Unplaced"/>
</dbReference>
<dbReference type="GO" id="GO:0015035">
    <property type="term" value="F:protein-disulfide reductase activity"/>
    <property type="evidence" value="ECO:0007669"/>
    <property type="project" value="InterPro"/>
</dbReference>
<dbReference type="CDD" id="cd02947">
    <property type="entry name" value="TRX_family"/>
    <property type="match status" value="1"/>
</dbReference>
<dbReference type="Gene3D" id="3.40.30.10">
    <property type="entry name" value="Glutaredoxin"/>
    <property type="match status" value="1"/>
</dbReference>
<dbReference type="InterPro" id="IPR005746">
    <property type="entry name" value="Thioredoxin"/>
</dbReference>
<dbReference type="InterPro" id="IPR036249">
    <property type="entry name" value="Thioredoxin-like_sf"/>
</dbReference>
<dbReference type="InterPro" id="IPR013766">
    <property type="entry name" value="Thioredoxin_domain"/>
</dbReference>
<dbReference type="NCBIfam" id="TIGR01068">
    <property type="entry name" value="thioredoxin"/>
    <property type="match status" value="1"/>
</dbReference>
<dbReference type="PANTHER" id="PTHR46115">
    <property type="entry name" value="THIOREDOXIN-LIKE PROTEIN 1"/>
    <property type="match status" value="1"/>
</dbReference>
<dbReference type="Pfam" id="PF00085">
    <property type="entry name" value="Thioredoxin"/>
    <property type="match status" value="1"/>
</dbReference>
<dbReference type="PIRSF" id="PIRSF000077">
    <property type="entry name" value="Thioredoxin"/>
    <property type="match status" value="1"/>
</dbReference>
<dbReference type="PRINTS" id="PR00421">
    <property type="entry name" value="THIOREDOXIN"/>
</dbReference>
<dbReference type="SUPFAM" id="SSF52833">
    <property type="entry name" value="Thioredoxin-like"/>
    <property type="match status" value="1"/>
</dbReference>
<dbReference type="PROSITE" id="PS51352">
    <property type="entry name" value="THIOREDOXIN_2"/>
    <property type="match status" value="1"/>
</dbReference>
<keyword id="KW-1015">Disulfide bond</keyword>
<keyword id="KW-0249">Electron transport</keyword>
<keyword id="KW-0676">Redox-active center</keyword>
<keyword id="KW-0813">Transport</keyword>
<gene>
    <name type="primary">TRX</name>
</gene>
<sequence>MSVEAVVKQVDGDALEAAIKGDKLLVCDFFATWCGPCKSLAPKLDAMAKENEKVIFVKLDVDECQDVAEKYRVTAMPTLIVFKNGCEIGHVVGANEAGIRELIQANA</sequence>
<accession>O17486</accession>
<evidence type="ECO:0000250" key="1"/>
<evidence type="ECO:0000255" key="2">
    <source>
        <dbReference type="PROSITE-ProRule" id="PRU00691"/>
    </source>
</evidence>
<evidence type="ECO:0000305" key="3"/>
<organism>
    <name type="scientific">Echinococcus granulosus</name>
    <name type="common">Hydatid tapeworm</name>
    <dbReference type="NCBI Taxonomy" id="6210"/>
    <lineage>
        <taxon>Eukaryota</taxon>
        <taxon>Metazoa</taxon>
        <taxon>Spiralia</taxon>
        <taxon>Lophotrochozoa</taxon>
        <taxon>Platyhelminthes</taxon>
        <taxon>Cestoda</taxon>
        <taxon>Eucestoda</taxon>
        <taxon>Cyclophyllidea</taxon>
        <taxon>Taeniidae</taxon>
        <taxon>Echinococcus</taxon>
        <taxon>Echinococcus granulosus group</taxon>
    </lineage>
</organism>
<proteinExistence type="inferred from homology"/>